<evidence type="ECO:0000250" key="1">
    <source>
        <dbReference type="UniProtKB" id="Q9VKI3"/>
    </source>
</evidence>
<evidence type="ECO:0000255" key="2"/>
<evidence type="ECO:0000255" key="3">
    <source>
        <dbReference type="PROSITE-ProRule" id="PRU00483"/>
    </source>
</evidence>
<evidence type="ECO:0000305" key="4"/>
<evidence type="ECO:0000312" key="5">
    <source>
        <dbReference type="EMBL" id="ABO71721.1"/>
    </source>
</evidence>
<organism>
    <name type="scientific">Drosophila mauritiana</name>
    <name type="common">Fruit fly</name>
    <dbReference type="NCBI Taxonomy" id="7226"/>
    <lineage>
        <taxon>Eukaryota</taxon>
        <taxon>Metazoa</taxon>
        <taxon>Ecdysozoa</taxon>
        <taxon>Arthropoda</taxon>
        <taxon>Hexapoda</taxon>
        <taxon>Insecta</taxon>
        <taxon>Pterygota</taxon>
        <taxon>Neoptera</taxon>
        <taxon>Endopterygota</taxon>
        <taxon>Diptera</taxon>
        <taxon>Brachycera</taxon>
        <taxon>Muscomorpha</taxon>
        <taxon>Ephydroidea</taxon>
        <taxon>Drosophilidae</taxon>
        <taxon>Drosophila</taxon>
        <taxon>Sophophora</taxon>
    </lineage>
</organism>
<feature type="signal peptide" evidence="2">
    <location>
        <begin position="1"/>
        <end position="17"/>
    </location>
</feature>
<feature type="chain" id="PRO_0000398795" description="Vitelline membrane protein Vm32E" evidence="2">
    <location>
        <begin position="18"/>
        <end position="118"/>
    </location>
</feature>
<feature type="domain" description="VM" evidence="3">
    <location>
        <begin position="36"/>
        <end position="75"/>
    </location>
</feature>
<comment type="function">
    <text evidence="1">Major early eggshell protein.</text>
</comment>
<comment type="subcellular location">
    <subcellularLocation>
        <location evidence="1">Secreted</location>
    </subcellularLocation>
</comment>
<comment type="similarity">
    <text evidence="4">Belongs to the vitelline membrane family.</text>
</comment>
<reference evidence="5" key="1">
    <citation type="journal article" date="2007" name="Mol. Biol. Evol.">
        <title>Rapid evolution of outer egg membrane proteins in the Drosophila melanogaster subgroup: a case of ecologically driven evolution of female reproductive traits.</title>
        <authorList>
            <person name="Jagadeeshan S."/>
            <person name="Singh R.S."/>
        </authorList>
    </citation>
    <scope>NUCLEOTIDE SEQUENCE [GENOMIC DNA]</scope>
</reference>
<proteinExistence type="inferred from homology"/>
<gene>
    <name evidence="5" type="primary">Vm32E</name>
</gene>
<name>VTU4_DROMA</name>
<accession>A4UM12</accession>
<dbReference type="EMBL" id="EF441680">
    <property type="protein sequence ID" value="ABO71721.1"/>
    <property type="molecule type" value="Genomic_DNA"/>
</dbReference>
<dbReference type="EnsemblMetazoa" id="XM_033296426.1">
    <property type="protein sequence ID" value="XP_033152317.1"/>
    <property type="gene ID" value="LOC117135878"/>
</dbReference>
<dbReference type="Proteomes" id="UP000515162">
    <property type="component" value="Unplaced"/>
</dbReference>
<dbReference type="GO" id="GO:0005615">
    <property type="term" value="C:extracellular space"/>
    <property type="evidence" value="ECO:0000250"/>
    <property type="project" value="UniProtKB"/>
</dbReference>
<dbReference type="GO" id="GO:0008316">
    <property type="term" value="F:structural constituent of vitelline membrane"/>
    <property type="evidence" value="ECO:0000250"/>
    <property type="project" value="UniProtKB"/>
</dbReference>
<dbReference type="GO" id="GO:0007305">
    <property type="term" value="P:vitelline membrane formation involved in chorion-containing eggshell formation"/>
    <property type="evidence" value="ECO:0000250"/>
    <property type="project" value="UniProtKB"/>
</dbReference>
<dbReference type="InterPro" id="IPR013135">
    <property type="entry name" value="Vitelline_membr_Cys-rich-dom"/>
</dbReference>
<dbReference type="Pfam" id="PF10542">
    <property type="entry name" value="Vitelline_membr"/>
    <property type="match status" value="1"/>
</dbReference>
<dbReference type="PROSITE" id="PS51137">
    <property type="entry name" value="VM"/>
    <property type="match status" value="1"/>
</dbReference>
<protein>
    <recommendedName>
        <fullName evidence="5">Vitelline membrane protein Vm32E</fullName>
    </recommendedName>
</protein>
<sequence>MKIVALTLVAFVALAGASCPYAAPAPAYSAPAAPSGYPAPPCPTNYLFSCQPNLAPAPCAQEAQAPAYGSAGAYTEQVPHYVGSPNREQVQQFHQRIGMAALMEELRGLGQGIQGQQY</sequence>
<keyword id="KW-0964">Secreted</keyword>
<keyword id="KW-0732">Signal</keyword>